<reference key="1">
    <citation type="journal article" date="2009" name="BMC Genomics">
        <title>Evidence for niche adaptation in the genome of the bovine pathogen Streptococcus uberis.</title>
        <authorList>
            <person name="Ward P.N."/>
            <person name="Holden M.T.G."/>
            <person name="Leigh J.A."/>
            <person name="Lennard N."/>
            <person name="Bignell A."/>
            <person name="Barron A."/>
            <person name="Clark L."/>
            <person name="Quail M.A."/>
            <person name="Woodward J."/>
            <person name="Barrell B.G."/>
            <person name="Egan S.A."/>
            <person name="Field T.R."/>
            <person name="Maskell D."/>
            <person name="Kehoe M."/>
            <person name="Dowson C.G."/>
            <person name="Chanter N."/>
            <person name="Whatmore A.M."/>
            <person name="Bentley S.D."/>
            <person name="Parkhill J."/>
        </authorList>
    </citation>
    <scope>NUCLEOTIDE SEQUENCE [LARGE SCALE GENOMIC DNA]</scope>
    <source>
        <strain>ATCC BAA-854 / 0140J</strain>
    </source>
</reference>
<comment type="function">
    <text evidence="1">Site-specific tyrosine recombinase, which acts by catalyzing the cutting and rejoining of the recombining DNA molecules. Essential to convert dimers of the bacterial chromosome into monomers to permit their segregation at cell division.</text>
</comment>
<comment type="activity regulation">
    <text evidence="1">FtsK is required for recombination.</text>
</comment>
<comment type="subcellular location">
    <subcellularLocation>
        <location evidence="1">Cytoplasm</location>
    </subcellularLocation>
</comment>
<comment type="similarity">
    <text evidence="1">Belongs to the 'phage' integrase family. XerS subfamily.</text>
</comment>
<gene>
    <name evidence="1" type="primary">xerS</name>
    <name type="ordered locus">SUB0913</name>
</gene>
<organism>
    <name type="scientific">Streptococcus uberis (strain ATCC BAA-854 / 0140J)</name>
    <dbReference type="NCBI Taxonomy" id="218495"/>
    <lineage>
        <taxon>Bacteria</taxon>
        <taxon>Bacillati</taxon>
        <taxon>Bacillota</taxon>
        <taxon>Bacilli</taxon>
        <taxon>Lactobacillales</taxon>
        <taxon>Streptococcaceae</taxon>
        <taxon>Streptococcus</taxon>
    </lineage>
</organism>
<protein>
    <recommendedName>
        <fullName evidence="1">Tyrosine recombinase XerS</fullName>
    </recommendedName>
</protein>
<name>XERS_STRU0</name>
<keyword id="KW-0131">Cell cycle</keyword>
<keyword id="KW-0132">Cell division</keyword>
<keyword id="KW-0159">Chromosome partition</keyword>
<keyword id="KW-0963">Cytoplasm</keyword>
<keyword id="KW-0229">DNA integration</keyword>
<keyword id="KW-0233">DNA recombination</keyword>
<keyword id="KW-0238">DNA-binding</keyword>
<keyword id="KW-1185">Reference proteome</keyword>
<evidence type="ECO:0000255" key="1">
    <source>
        <dbReference type="HAMAP-Rule" id="MF_01816"/>
    </source>
</evidence>
<evidence type="ECO:0000255" key="2">
    <source>
        <dbReference type="PROSITE-ProRule" id="PRU01246"/>
    </source>
</evidence>
<evidence type="ECO:0000255" key="3">
    <source>
        <dbReference type="PROSITE-ProRule" id="PRU01248"/>
    </source>
</evidence>
<proteinExistence type="inferred from homology"/>
<dbReference type="EMBL" id="AM946015">
    <property type="protein sequence ID" value="CAR42035.1"/>
    <property type="molecule type" value="Genomic_DNA"/>
</dbReference>
<dbReference type="RefSeq" id="WP_012658412.1">
    <property type="nucleotide sequence ID" value="NC_012004.1"/>
</dbReference>
<dbReference type="SMR" id="B9DUD2"/>
<dbReference type="STRING" id="218495.SUB0913"/>
<dbReference type="KEGG" id="sub:SUB0913"/>
<dbReference type="eggNOG" id="COG4974">
    <property type="taxonomic scope" value="Bacteria"/>
</dbReference>
<dbReference type="HOGENOM" id="CLU_027562_9_6_9"/>
<dbReference type="OrthoDB" id="283809at2"/>
<dbReference type="Proteomes" id="UP000000449">
    <property type="component" value="Chromosome"/>
</dbReference>
<dbReference type="GO" id="GO:0005737">
    <property type="term" value="C:cytoplasm"/>
    <property type="evidence" value="ECO:0007669"/>
    <property type="project" value="UniProtKB-SubCell"/>
</dbReference>
<dbReference type="GO" id="GO:0003677">
    <property type="term" value="F:DNA binding"/>
    <property type="evidence" value="ECO:0007669"/>
    <property type="project" value="UniProtKB-KW"/>
</dbReference>
<dbReference type="GO" id="GO:0009037">
    <property type="term" value="F:tyrosine-based site-specific recombinase activity"/>
    <property type="evidence" value="ECO:0007669"/>
    <property type="project" value="UniProtKB-UniRule"/>
</dbReference>
<dbReference type="GO" id="GO:0051301">
    <property type="term" value="P:cell division"/>
    <property type="evidence" value="ECO:0007669"/>
    <property type="project" value="UniProtKB-KW"/>
</dbReference>
<dbReference type="GO" id="GO:0007059">
    <property type="term" value="P:chromosome segregation"/>
    <property type="evidence" value="ECO:0007669"/>
    <property type="project" value="UniProtKB-UniRule"/>
</dbReference>
<dbReference type="GO" id="GO:0006310">
    <property type="term" value="P:DNA recombination"/>
    <property type="evidence" value="ECO:0007669"/>
    <property type="project" value="UniProtKB-UniRule"/>
</dbReference>
<dbReference type="Gene3D" id="1.10.150.130">
    <property type="match status" value="1"/>
</dbReference>
<dbReference type="Gene3D" id="1.10.443.10">
    <property type="entry name" value="Intergrase catalytic core"/>
    <property type="match status" value="1"/>
</dbReference>
<dbReference type="HAMAP" id="MF_01816">
    <property type="entry name" value="Recomb_XerS"/>
    <property type="match status" value="1"/>
</dbReference>
<dbReference type="InterPro" id="IPR044068">
    <property type="entry name" value="CB"/>
</dbReference>
<dbReference type="InterPro" id="IPR011010">
    <property type="entry name" value="DNA_brk_join_enz"/>
</dbReference>
<dbReference type="InterPro" id="IPR013762">
    <property type="entry name" value="Integrase-like_cat_sf"/>
</dbReference>
<dbReference type="InterPro" id="IPR002104">
    <property type="entry name" value="Integrase_catalytic"/>
</dbReference>
<dbReference type="InterPro" id="IPR010998">
    <property type="entry name" value="Integrase_recombinase_N"/>
</dbReference>
<dbReference type="InterPro" id="IPR004107">
    <property type="entry name" value="Integrase_SAM-like_N"/>
</dbReference>
<dbReference type="InterPro" id="IPR023670">
    <property type="entry name" value="Recomb_XerS"/>
</dbReference>
<dbReference type="InterPro" id="IPR050090">
    <property type="entry name" value="Tyrosine_recombinase_XerCD"/>
</dbReference>
<dbReference type="NCBIfam" id="NF003462">
    <property type="entry name" value="PRK05084.1"/>
    <property type="match status" value="1"/>
</dbReference>
<dbReference type="PANTHER" id="PTHR30349">
    <property type="entry name" value="PHAGE INTEGRASE-RELATED"/>
    <property type="match status" value="1"/>
</dbReference>
<dbReference type="PANTHER" id="PTHR30349:SF77">
    <property type="entry name" value="TYROSINE RECOMBINASE XERC"/>
    <property type="match status" value="1"/>
</dbReference>
<dbReference type="Pfam" id="PF02899">
    <property type="entry name" value="Phage_int_SAM_1"/>
    <property type="match status" value="1"/>
</dbReference>
<dbReference type="Pfam" id="PF00589">
    <property type="entry name" value="Phage_integrase"/>
    <property type="match status" value="1"/>
</dbReference>
<dbReference type="SUPFAM" id="SSF56349">
    <property type="entry name" value="DNA breaking-rejoining enzymes"/>
    <property type="match status" value="1"/>
</dbReference>
<dbReference type="PROSITE" id="PS51900">
    <property type="entry name" value="CB"/>
    <property type="match status" value="1"/>
</dbReference>
<dbReference type="PROSITE" id="PS51898">
    <property type="entry name" value="TYR_RECOMBINASE"/>
    <property type="match status" value="1"/>
</dbReference>
<accession>B9DUD2</accession>
<sequence length="356" mass="41597">MRRELLLEKIEEYKAIMPWFVLDYYQSKLSVPYSFTTLYEYLKEYKRFFDWLIDSGISDAPRIADIKLDVLEHLTKKDMESFILYLRERPSLNTYSTKSGVSQTTINRTLSALSSLYKYLTEEVENDQGEPYFYRNVMKKVATKKKKETLASRAENIKQKLFLGDETMEFLDYVDCEYENKLSNRAKSSFQKNKERDLAIIALLLASGVRLSEAVNLDLKDVNLKMMVIEVTRKGGKRDSVNVASFAKPYLEHYLEIRQKRYKADKQDQAFFLTEYRGVPNRIDASSIEKMVGKYSQDFKIRVTPHKLRHTLATRLYDATKSQVLVSHQLGHASTQVTDLYTHIVNDEQKNALDKL</sequence>
<feature type="chain" id="PRO_1000187917" description="Tyrosine recombinase XerS">
    <location>
        <begin position="1"/>
        <end position="356"/>
    </location>
</feature>
<feature type="domain" description="Core-binding (CB)" evidence="3">
    <location>
        <begin position="16"/>
        <end position="121"/>
    </location>
</feature>
<feature type="domain" description="Tyr recombinase" evidence="2">
    <location>
        <begin position="169"/>
        <end position="354"/>
    </location>
</feature>
<feature type="active site" evidence="1">
    <location>
        <position position="210"/>
    </location>
</feature>
<feature type="active site" evidence="1">
    <location>
        <position position="234"/>
    </location>
</feature>
<feature type="active site" evidence="1">
    <location>
        <position position="306"/>
    </location>
</feature>
<feature type="active site" evidence="1">
    <location>
        <position position="309"/>
    </location>
</feature>
<feature type="active site" evidence="1">
    <location>
        <position position="332"/>
    </location>
</feature>
<feature type="active site" description="O-(3'-phospho-DNA)-tyrosine intermediate" evidence="1">
    <location>
        <position position="341"/>
    </location>
</feature>